<accession>B5E9N7</accession>
<reference key="1">
    <citation type="submission" date="2008-07" db="EMBL/GenBank/DDBJ databases">
        <title>Complete sequence of Geobacter bemidjiensis BEM.</title>
        <authorList>
            <consortium name="US DOE Joint Genome Institute"/>
            <person name="Lucas S."/>
            <person name="Copeland A."/>
            <person name="Lapidus A."/>
            <person name="Glavina del Rio T."/>
            <person name="Dalin E."/>
            <person name="Tice H."/>
            <person name="Bruce D."/>
            <person name="Goodwin L."/>
            <person name="Pitluck S."/>
            <person name="Kiss H."/>
            <person name="Brettin T."/>
            <person name="Detter J.C."/>
            <person name="Han C."/>
            <person name="Kuske C.R."/>
            <person name="Schmutz J."/>
            <person name="Larimer F."/>
            <person name="Land M."/>
            <person name="Hauser L."/>
            <person name="Kyrpides N."/>
            <person name="Lykidis A."/>
            <person name="Lovley D."/>
            <person name="Richardson P."/>
        </authorList>
    </citation>
    <scope>NUCLEOTIDE SEQUENCE [LARGE SCALE GENOMIC DNA]</scope>
    <source>
        <strain>ATCC BAA-1014 / DSM 16622 / JCM 12645 / Bem</strain>
    </source>
</reference>
<sequence length="68" mass="7525">MARVTVEDCLEKVDNRFLLVMLASKRVKQLFKGARPLIDNRGANKNVVVSLREIAAGKIGCEIGKKGR</sequence>
<protein>
    <recommendedName>
        <fullName evidence="1">DNA-directed RNA polymerase subunit omega</fullName>
        <shortName evidence="1">RNAP omega subunit</shortName>
        <ecNumber evidence="1">2.7.7.6</ecNumber>
    </recommendedName>
    <alternativeName>
        <fullName evidence="1">RNA polymerase omega subunit</fullName>
    </alternativeName>
    <alternativeName>
        <fullName evidence="1">Transcriptase subunit omega</fullName>
    </alternativeName>
</protein>
<name>RPOZ_CITBB</name>
<comment type="function">
    <text evidence="1">Promotes RNA polymerase assembly. Latches the N- and C-terminal regions of the beta' subunit thereby facilitating its interaction with the beta and alpha subunits.</text>
</comment>
<comment type="catalytic activity">
    <reaction evidence="1">
        <text>RNA(n) + a ribonucleoside 5'-triphosphate = RNA(n+1) + diphosphate</text>
        <dbReference type="Rhea" id="RHEA:21248"/>
        <dbReference type="Rhea" id="RHEA-COMP:14527"/>
        <dbReference type="Rhea" id="RHEA-COMP:17342"/>
        <dbReference type="ChEBI" id="CHEBI:33019"/>
        <dbReference type="ChEBI" id="CHEBI:61557"/>
        <dbReference type="ChEBI" id="CHEBI:140395"/>
        <dbReference type="EC" id="2.7.7.6"/>
    </reaction>
</comment>
<comment type="subunit">
    <text evidence="1">The RNAP catalytic core consists of 2 alpha, 1 beta, 1 beta' and 1 omega subunit. When a sigma factor is associated with the core the holoenzyme is formed, which can initiate transcription.</text>
</comment>
<comment type="similarity">
    <text evidence="1">Belongs to the RNA polymerase subunit omega family.</text>
</comment>
<evidence type="ECO:0000255" key="1">
    <source>
        <dbReference type="HAMAP-Rule" id="MF_00366"/>
    </source>
</evidence>
<gene>
    <name evidence="1" type="primary">rpoZ</name>
    <name type="ordered locus">Gbem_3212</name>
</gene>
<dbReference type="EC" id="2.7.7.6" evidence="1"/>
<dbReference type="EMBL" id="CP001124">
    <property type="protein sequence ID" value="ACH40211.1"/>
    <property type="molecule type" value="Genomic_DNA"/>
</dbReference>
<dbReference type="RefSeq" id="WP_012531643.1">
    <property type="nucleotide sequence ID" value="NC_011146.1"/>
</dbReference>
<dbReference type="SMR" id="B5E9N7"/>
<dbReference type="STRING" id="404380.Gbem_3212"/>
<dbReference type="KEGG" id="gbm:Gbem_3212"/>
<dbReference type="eggNOG" id="COG1758">
    <property type="taxonomic scope" value="Bacteria"/>
</dbReference>
<dbReference type="HOGENOM" id="CLU_125406_5_1_7"/>
<dbReference type="OrthoDB" id="9796300at2"/>
<dbReference type="Proteomes" id="UP000008825">
    <property type="component" value="Chromosome"/>
</dbReference>
<dbReference type="GO" id="GO:0000428">
    <property type="term" value="C:DNA-directed RNA polymerase complex"/>
    <property type="evidence" value="ECO:0007669"/>
    <property type="project" value="UniProtKB-KW"/>
</dbReference>
<dbReference type="GO" id="GO:0003677">
    <property type="term" value="F:DNA binding"/>
    <property type="evidence" value="ECO:0007669"/>
    <property type="project" value="UniProtKB-UniRule"/>
</dbReference>
<dbReference type="GO" id="GO:0003899">
    <property type="term" value="F:DNA-directed RNA polymerase activity"/>
    <property type="evidence" value="ECO:0007669"/>
    <property type="project" value="UniProtKB-UniRule"/>
</dbReference>
<dbReference type="GO" id="GO:0006351">
    <property type="term" value="P:DNA-templated transcription"/>
    <property type="evidence" value="ECO:0007669"/>
    <property type="project" value="UniProtKB-UniRule"/>
</dbReference>
<dbReference type="Gene3D" id="3.90.940.10">
    <property type="match status" value="1"/>
</dbReference>
<dbReference type="HAMAP" id="MF_00366">
    <property type="entry name" value="RNApol_bact_RpoZ"/>
    <property type="match status" value="1"/>
</dbReference>
<dbReference type="InterPro" id="IPR003716">
    <property type="entry name" value="DNA-dir_RNA_pol_omega"/>
</dbReference>
<dbReference type="InterPro" id="IPR006110">
    <property type="entry name" value="Pol_omega/Rpo6/RPB6"/>
</dbReference>
<dbReference type="InterPro" id="IPR036161">
    <property type="entry name" value="RPB6/omega-like_sf"/>
</dbReference>
<dbReference type="NCBIfam" id="TIGR00690">
    <property type="entry name" value="rpoZ"/>
    <property type="match status" value="1"/>
</dbReference>
<dbReference type="PANTHER" id="PTHR34476">
    <property type="entry name" value="DNA-DIRECTED RNA POLYMERASE SUBUNIT OMEGA"/>
    <property type="match status" value="1"/>
</dbReference>
<dbReference type="PANTHER" id="PTHR34476:SF1">
    <property type="entry name" value="DNA-DIRECTED RNA POLYMERASE SUBUNIT OMEGA"/>
    <property type="match status" value="1"/>
</dbReference>
<dbReference type="Pfam" id="PF01192">
    <property type="entry name" value="RNA_pol_Rpb6"/>
    <property type="match status" value="1"/>
</dbReference>
<dbReference type="SMART" id="SM01409">
    <property type="entry name" value="RNA_pol_Rpb6"/>
    <property type="match status" value="1"/>
</dbReference>
<dbReference type="SUPFAM" id="SSF63562">
    <property type="entry name" value="RPB6/omega subunit-like"/>
    <property type="match status" value="1"/>
</dbReference>
<organism>
    <name type="scientific">Citrifermentans bemidjiense (strain ATCC BAA-1014 / DSM 16622 / JCM 12645 / Bem)</name>
    <name type="common">Geobacter bemidjiensis</name>
    <dbReference type="NCBI Taxonomy" id="404380"/>
    <lineage>
        <taxon>Bacteria</taxon>
        <taxon>Pseudomonadati</taxon>
        <taxon>Thermodesulfobacteriota</taxon>
        <taxon>Desulfuromonadia</taxon>
        <taxon>Geobacterales</taxon>
        <taxon>Geobacteraceae</taxon>
        <taxon>Citrifermentans</taxon>
    </lineage>
</organism>
<keyword id="KW-0240">DNA-directed RNA polymerase</keyword>
<keyword id="KW-0548">Nucleotidyltransferase</keyword>
<keyword id="KW-1185">Reference proteome</keyword>
<keyword id="KW-0804">Transcription</keyword>
<keyword id="KW-0808">Transferase</keyword>
<proteinExistence type="inferred from homology"/>
<feature type="chain" id="PRO_1000121229" description="DNA-directed RNA polymerase subunit omega">
    <location>
        <begin position="1"/>
        <end position="68"/>
    </location>
</feature>